<accession>P0A2M0</accession>
<accession>Q9XCQ1</accession>
<sequence>MRSLADFEFNNAPLCDGMILASEMIRLDFPTQFVYDELERLVSLAQEEISQLLSQDEQLEKLLALFYGEWGFTDSRGVYRLSDALWLDKVLKKRQGSAVSLGAILLWIANRLDLPLVPVIFPTQLILRIESLEGEMWLINPFNGETLDEHTLEVWLKGNISPVAELFNEDLDEADNAEVIRKLLDTLKSSLMEERQMELALRVSEALLQFNPEDPYEIRDRGLIYAQLECEHVALTDLSYFVEQCPEDPISEMIRAQINTIAHKQIVLH</sequence>
<reference key="1">
    <citation type="journal article" date="2001" name="Nature">
        <title>Complete genome sequence of a multiple drug resistant Salmonella enterica serovar Typhi CT18.</title>
        <authorList>
            <person name="Parkhill J."/>
            <person name="Dougan G."/>
            <person name="James K.D."/>
            <person name="Thomson N.R."/>
            <person name="Pickard D."/>
            <person name="Wain J."/>
            <person name="Churcher C.M."/>
            <person name="Mungall K.L."/>
            <person name="Bentley S.D."/>
            <person name="Holden M.T.G."/>
            <person name="Sebaihia M."/>
            <person name="Baker S."/>
            <person name="Basham D."/>
            <person name="Brooks K."/>
            <person name="Chillingworth T."/>
            <person name="Connerton P."/>
            <person name="Cronin A."/>
            <person name="Davis P."/>
            <person name="Davies R.M."/>
            <person name="Dowd L."/>
            <person name="White N."/>
            <person name="Farrar J."/>
            <person name="Feltwell T."/>
            <person name="Hamlin N."/>
            <person name="Haque A."/>
            <person name="Hien T.T."/>
            <person name="Holroyd S."/>
            <person name="Jagels K."/>
            <person name="Krogh A."/>
            <person name="Larsen T.S."/>
            <person name="Leather S."/>
            <person name="Moule S."/>
            <person name="O'Gaora P."/>
            <person name="Parry C."/>
            <person name="Quail M.A."/>
            <person name="Rutherford K.M."/>
            <person name="Simmonds M."/>
            <person name="Skelton J."/>
            <person name="Stevens K."/>
            <person name="Whitehead S."/>
            <person name="Barrell B.G."/>
        </authorList>
    </citation>
    <scope>NUCLEOTIDE SEQUENCE [LARGE SCALE GENOMIC DNA]</scope>
    <source>
        <strain>CT18</strain>
    </source>
</reference>
<reference key="2">
    <citation type="journal article" date="2003" name="J. Bacteriol.">
        <title>Comparative genomics of Salmonella enterica serovar Typhi strains Ty2 and CT18.</title>
        <authorList>
            <person name="Deng W."/>
            <person name="Liou S.-R."/>
            <person name="Plunkett G. III"/>
            <person name="Mayhew G.F."/>
            <person name="Rose D.J."/>
            <person name="Burland V."/>
            <person name="Kodoyianni V."/>
            <person name="Schwartz D.C."/>
            <person name="Blattner F.R."/>
        </authorList>
    </citation>
    <scope>NUCLEOTIDE SEQUENCE [LARGE SCALE GENOMIC DNA]</scope>
    <source>
        <strain>ATCC 700931 / Ty2</strain>
    </source>
</reference>
<name>SIRB1_SALTI</name>
<organism>
    <name type="scientific">Salmonella typhi</name>
    <dbReference type="NCBI Taxonomy" id="90370"/>
    <lineage>
        <taxon>Bacteria</taxon>
        <taxon>Pseudomonadati</taxon>
        <taxon>Pseudomonadota</taxon>
        <taxon>Gammaproteobacteria</taxon>
        <taxon>Enterobacterales</taxon>
        <taxon>Enterobacteriaceae</taxon>
        <taxon>Salmonella</taxon>
    </lineage>
</organism>
<dbReference type="EMBL" id="AL513382">
    <property type="protein sequence ID" value="CAD02128.1"/>
    <property type="molecule type" value="Genomic_DNA"/>
</dbReference>
<dbReference type="EMBL" id="AE014613">
    <property type="protein sequence ID" value="AAO68766.1"/>
    <property type="molecule type" value="Genomic_DNA"/>
</dbReference>
<dbReference type="RefSeq" id="NP_456283.1">
    <property type="nucleotide sequence ID" value="NC_003198.1"/>
</dbReference>
<dbReference type="RefSeq" id="WP_001257065.1">
    <property type="nucleotide sequence ID" value="NZ_WSUR01000004.1"/>
</dbReference>
<dbReference type="SMR" id="P0A2M0"/>
<dbReference type="STRING" id="220341.gene:17585822"/>
<dbReference type="KEGG" id="stt:t1103"/>
<dbReference type="KEGG" id="sty:STY1898"/>
<dbReference type="PATRIC" id="fig|220341.7.peg.1912"/>
<dbReference type="eggNOG" id="COG2912">
    <property type="taxonomic scope" value="Bacteria"/>
</dbReference>
<dbReference type="HOGENOM" id="CLU_063810_0_0_6"/>
<dbReference type="OMA" id="WIAAEHD"/>
<dbReference type="OrthoDB" id="232498at2"/>
<dbReference type="Proteomes" id="UP000000541">
    <property type="component" value="Chromosome"/>
</dbReference>
<dbReference type="Proteomes" id="UP000002670">
    <property type="component" value="Chromosome"/>
</dbReference>
<dbReference type="InterPro" id="IPR032698">
    <property type="entry name" value="SirB1_N"/>
</dbReference>
<dbReference type="NCBIfam" id="NF008188">
    <property type="entry name" value="PRK10941.1"/>
    <property type="match status" value="1"/>
</dbReference>
<dbReference type="PANTHER" id="PTHR31350:SF21">
    <property type="entry name" value="F-BOX ONLY PROTEIN 21"/>
    <property type="match status" value="1"/>
</dbReference>
<dbReference type="PANTHER" id="PTHR31350">
    <property type="entry name" value="SI:DKEY-261L7.2"/>
    <property type="match status" value="1"/>
</dbReference>
<dbReference type="Pfam" id="PF13371">
    <property type="entry name" value="TPR_9"/>
    <property type="match status" value="1"/>
</dbReference>
<dbReference type="Pfam" id="PF13369">
    <property type="entry name" value="Transglut_core2"/>
    <property type="match status" value="1"/>
</dbReference>
<proteinExistence type="inferred from homology"/>
<protein>
    <recommendedName>
        <fullName>Protein SirB1</fullName>
    </recommendedName>
</protein>
<gene>
    <name type="primary">sirB1</name>
    <name type="ordered locus">STY1898</name>
    <name type="ordered locus">t1103</name>
</gene>
<comment type="function">
    <text evidence="1">Required for maximal expression of sirC, not required to invade host cells (By similarity).</text>
</comment>
<comment type="similarity">
    <text evidence="2">Belongs to the UPF0162 family.</text>
</comment>
<feature type="chain" id="PRO_0000202379" description="Protein SirB1">
    <location>
        <begin position="1"/>
        <end position="269"/>
    </location>
</feature>
<evidence type="ECO:0000250" key="1">
    <source>
        <dbReference type="UniProtKB" id="P0A2L9"/>
    </source>
</evidence>
<evidence type="ECO:0000305" key="2"/>